<sequence>MVTMKDLLECGVHFGHQTRRWNPKTKKFIFGVRKNIHIIDLQKTLRYFRYTYNIVRDASAQGKSIMFVGTKKQANETLKEFAESIQVPYVNYRWLGGMLTNFSTIRKSVRKLEIIEEMENSGQIDLLTKKEKLMILRKKEKLDKYLGGVRHMKKIPDMIFVIDVAKEKIAVAEARKLHIPIVAPLDTNCDPDLVDYPIPGNDDAIRSIRLFCKEMSEAILEGRELMQEEIVHADENSEEIEFVSNEEKEEMLAEIQKEITQGAE</sequence>
<reference key="1">
    <citation type="journal article" date="2006" name="Proc. Natl. Acad. Sci. U.S.A.">
        <title>The complete genome sequence of a chronic atrophic gastritis Helicobacter pylori strain: evolution during disease progression.</title>
        <authorList>
            <person name="Oh J.D."/>
            <person name="Kling-Baeckhed H."/>
            <person name="Giannakis M."/>
            <person name="Xu J."/>
            <person name="Fulton R.S."/>
            <person name="Fulton L.A."/>
            <person name="Cordum H.S."/>
            <person name="Wang C."/>
            <person name="Elliott G."/>
            <person name="Edwards J."/>
            <person name="Mardis E.R."/>
            <person name="Engstrand L.G."/>
            <person name="Gordon J.I."/>
        </authorList>
    </citation>
    <scope>NUCLEOTIDE SEQUENCE [LARGE SCALE GENOMIC DNA]</scope>
    <source>
        <strain>HPAG1</strain>
    </source>
</reference>
<proteinExistence type="inferred from homology"/>
<gene>
    <name evidence="1" type="primary">rpsB</name>
    <name type="ordered locus">HPAG1_1503</name>
</gene>
<feature type="chain" id="PRO_1000003977" description="Small ribosomal subunit protein uS2">
    <location>
        <begin position="1"/>
        <end position="264"/>
    </location>
</feature>
<accession>Q1CR52</accession>
<keyword id="KW-0687">Ribonucleoprotein</keyword>
<keyword id="KW-0689">Ribosomal protein</keyword>
<organism>
    <name type="scientific">Helicobacter pylori (strain HPAG1)</name>
    <dbReference type="NCBI Taxonomy" id="357544"/>
    <lineage>
        <taxon>Bacteria</taxon>
        <taxon>Pseudomonadati</taxon>
        <taxon>Campylobacterota</taxon>
        <taxon>Epsilonproteobacteria</taxon>
        <taxon>Campylobacterales</taxon>
        <taxon>Helicobacteraceae</taxon>
        <taxon>Helicobacter</taxon>
    </lineage>
</organism>
<dbReference type="EMBL" id="CP000241">
    <property type="protein sequence ID" value="ABF85570.1"/>
    <property type="molecule type" value="Genomic_DNA"/>
</dbReference>
<dbReference type="RefSeq" id="WP_000258276.1">
    <property type="nucleotide sequence ID" value="NC_008086.1"/>
</dbReference>
<dbReference type="SMR" id="Q1CR52"/>
<dbReference type="KEGG" id="hpa:HPAG1_1503"/>
<dbReference type="HOGENOM" id="CLU_040318_1_2_7"/>
<dbReference type="GO" id="GO:0022627">
    <property type="term" value="C:cytosolic small ribosomal subunit"/>
    <property type="evidence" value="ECO:0007669"/>
    <property type="project" value="TreeGrafter"/>
</dbReference>
<dbReference type="GO" id="GO:0003735">
    <property type="term" value="F:structural constituent of ribosome"/>
    <property type="evidence" value="ECO:0007669"/>
    <property type="project" value="InterPro"/>
</dbReference>
<dbReference type="GO" id="GO:0006412">
    <property type="term" value="P:translation"/>
    <property type="evidence" value="ECO:0007669"/>
    <property type="project" value="UniProtKB-UniRule"/>
</dbReference>
<dbReference type="CDD" id="cd01425">
    <property type="entry name" value="RPS2"/>
    <property type="match status" value="1"/>
</dbReference>
<dbReference type="FunFam" id="1.10.287.610:FF:000001">
    <property type="entry name" value="30S ribosomal protein S2"/>
    <property type="match status" value="1"/>
</dbReference>
<dbReference type="Gene3D" id="3.40.50.10490">
    <property type="entry name" value="Glucose-6-phosphate isomerase like protein, domain 1"/>
    <property type="match status" value="1"/>
</dbReference>
<dbReference type="Gene3D" id="1.10.287.610">
    <property type="entry name" value="Helix hairpin bin"/>
    <property type="match status" value="1"/>
</dbReference>
<dbReference type="HAMAP" id="MF_00291_B">
    <property type="entry name" value="Ribosomal_uS2_B"/>
    <property type="match status" value="1"/>
</dbReference>
<dbReference type="InterPro" id="IPR001865">
    <property type="entry name" value="Ribosomal_uS2"/>
</dbReference>
<dbReference type="InterPro" id="IPR005706">
    <property type="entry name" value="Ribosomal_uS2_bac/mit/plastid"/>
</dbReference>
<dbReference type="InterPro" id="IPR018130">
    <property type="entry name" value="Ribosomal_uS2_CS"/>
</dbReference>
<dbReference type="InterPro" id="IPR023591">
    <property type="entry name" value="Ribosomal_uS2_flav_dom_sf"/>
</dbReference>
<dbReference type="NCBIfam" id="TIGR01011">
    <property type="entry name" value="rpsB_bact"/>
    <property type="match status" value="1"/>
</dbReference>
<dbReference type="PANTHER" id="PTHR12534">
    <property type="entry name" value="30S RIBOSOMAL PROTEIN S2 PROKARYOTIC AND ORGANELLAR"/>
    <property type="match status" value="1"/>
</dbReference>
<dbReference type="PANTHER" id="PTHR12534:SF0">
    <property type="entry name" value="SMALL RIBOSOMAL SUBUNIT PROTEIN US2M"/>
    <property type="match status" value="1"/>
</dbReference>
<dbReference type="Pfam" id="PF00318">
    <property type="entry name" value="Ribosomal_S2"/>
    <property type="match status" value="1"/>
</dbReference>
<dbReference type="PRINTS" id="PR00395">
    <property type="entry name" value="RIBOSOMALS2"/>
</dbReference>
<dbReference type="SUPFAM" id="SSF52313">
    <property type="entry name" value="Ribosomal protein S2"/>
    <property type="match status" value="1"/>
</dbReference>
<dbReference type="PROSITE" id="PS00962">
    <property type="entry name" value="RIBOSOMAL_S2_1"/>
    <property type="match status" value="1"/>
</dbReference>
<dbReference type="PROSITE" id="PS00963">
    <property type="entry name" value="RIBOSOMAL_S2_2"/>
    <property type="match status" value="1"/>
</dbReference>
<comment type="similarity">
    <text evidence="1">Belongs to the universal ribosomal protein uS2 family.</text>
</comment>
<name>RS2_HELPH</name>
<evidence type="ECO:0000255" key="1">
    <source>
        <dbReference type="HAMAP-Rule" id="MF_00291"/>
    </source>
</evidence>
<evidence type="ECO:0000305" key="2"/>
<protein>
    <recommendedName>
        <fullName evidence="1">Small ribosomal subunit protein uS2</fullName>
    </recommendedName>
    <alternativeName>
        <fullName evidence="2">30S ribosomal protein S2</fullName>
    </alternativeName>
</protein>